<gene>
    <name evidence="1" type="primary">fusA1</name>
    <name type="ordered locus">Tery_0475</name>
</gene>
<accession>Q118Z3</accession>
<dbReference type="EMBL" id="CP000393">
    <property type="protein sequence ID" value="ABG49931.1"/>
    <property type="molecule type" value="Genomic_DNA"/>
</dbReference>
<dbReference type="RefSeq" id="WP_011610326.1">
    <property type="nucleotide sequence ID" value="NC_008312.1"/>
</dbReference>
<dbReference type="SMR" id="Q118Z3"/>
<dbReference type="STRING" id="203124.Tery_0475"/>
<dbReference type="KEGG" id="ter:Tery_0475"/>
<dbReference type="eggNOG" id="COG0480">
    <property type="taxonomic scope" value="Bacteria"/>
</dbReference>
<dbReference type="HOGENOM" id="CLU_002794_4_1_3"/>
<dbReference type="OrthoDB" id="9804431at2"/>
<dbReference type="GO" id="GO:0005737">
    <property type="term" value="C:cytoplasm"/>
    <property type="evidence" value="ECO:0007669"/>
    <property type="project" value="UniProtKB-SubCell"/>
</dbReference>
<dbReference type="GO" id="GO:0005525">
    <property type="term" value="F:GTP binding"/>
    <property type="evidence" value="ECO:0007669"/>
    <property type="project" value="UniProtKB-UniRule"/>
</dbReference>
<dbReference type="GO" id="GO:0003924">
    <property type="term" value="F:GTPase activity"/>
    <property type="evidence" value="ECO:0007669"/>
    <property type="project" value="InterPro"/>
</dbReference>
<dbReference type="GO" id="GO:0003746">
    <property type="term" value="F:translation elongation factor activity"/>
    <property type="evidence" value="ECO:0007669"/>
    <property type="project" value="UniProtKB-UniRule"/>
</dbReference>
<dbReference type="GO" id="GO:0032790">
    <property type="term" value="P:ribosome disassembly"/>
    <property type="evidence" value="ECO:0007669"/>
    <property type="project" value="TreeGrafter"/>
</dbReference>
<dbReference type="CDD" id="cd01886">
    <property type="entry name" value="EF-G"/>
    <property type="match status" value="1"/>
</dbReference>
<dbReference type="CDD" id="cd16262">
    <property type="entry name" value="EFG_III"/>
    <property type="match status" value="1"/>
</dbReference>
<dbReference type="CDD" id="cd01434">
    <property type="entry name" value="EFG_mtEFG1_IV"/>
    <property type="match status" value="1"/>
</dbReference>
<dbReference type="CDD" id="cd03713">
    <property type="entry name" value="EFG_mtEFG_C"/>
    <property type="match status" value="1"/>
</dbReference>
<dbReference type="CDD" id="cd04088">
    <property type="entry name" value="EFG_mtEFG_II"/>
    <property type="match status" value="1"/>
</dbReference>
<dbReference type="FunFam" id="2.40.30.10:FF:000006">
    <property type="entry name" value="Elongation factor G"/>
    <property type="match status" value="1"/>
</dbReference>
<dbReference type="FunFam" id="3.30.230.10:FF:000003">
    <property type="entry name" value="Elongation factor G"/>
    <property type="match status" value="1"/>
</dbReference>
<dbReference type="FunFam" id="3.30.70.240:FF:000001">
    <property type="entry name" value="Elongation factor G"/>
    <property type="match status" value="1"/>
</dbReference>
<dbReference type="FunFam" id="3.30.70.870:FF:000001">
    <property type="entry name" value="Elongation factor G"/>
    <property type="match status" value="1"/>
</dbReference>
<dbReference type="FunFam" id="3.40.50.300:FF:000029">
    <property type="entry name" value="Elongation factor G"/>
    <property type="match status" value="1"/>
</dbReference>
<dbReference type="Gene3D" id="3.30.230.10">
    <property type="match status" value="1"/>
</dbReference>
<dbReference type="Gene3D" id="3.30.70.240">
    <property type="match status" value="1"/>
</dbReference>
<dbReference type="Gene3D" id="3.30.70.870">
    <property type="entry name" value="Elongation Factor G (Translational Gtpase), domain 3"/>
    <property type="match status" value="1"/>
</dbReference>
<dbReference type="Gene3D" id="3.40.50.300">
    <property type="entry name" value="P-loop containing nucleotide triphosphate hydrolases"/>
    <property type="match status" value="1"/>
</dbReference>
<dbReference type="Gene3D" id="2.40.30.10">
    <property type="entry name" value="Translation factors"/>
    <property type="match status" value="1"/>
</dbReference>
<dbReference type="HAMAP" id="MF_00054_B">
    <property type="entry name" value="EF_G_EF_2_B"/>
    <property type="match status" value="1"/>
</dbReference>
<dbReference type="InterPro" id="IPR041095">
    <property type="entry name" value="EFG_II"/>
</dbReference>
<dbReference type="InterPro" id="IPR009022">
    <property type="entry name" value="EFG_III"/>
</dbReference>
<dbReference type="InterPro" id="IPR035647">
    <property type="entry name" value="EFG_III/V"/>
</dbReference>
<dbReference type="InterPro" id="IPR047872">
    <property type="entry name" value="EFG_IV"/>
</dbReference>
<dbReference type="InterPro" id="IPR035649">
    <property type="entry name" value="EFG_V"/>
</dbReference>
<dbReference type="InterPro" id="IPR000640">
    <property type="entry name" value="EFG_V-like"/>
</dbReference>
<dbReference type="InterPro" id="IPR004161">
    <property type="entry name" value="EFTu-like_2"/>
</dbReference>
<dbReference type="InterPro" id="IPR031157">
    <property type="entry name" value="G_TR_CS"/>
</dbReference>
<dbReference type="InterPro" id="IPR027417">
    <property type="entry name" value="P-loop_NTPase"/>
</dbReference>
<dbReference type="InterPro" id="IPR020568">
    <property type="entry name" value="Ribosomal_Su5_D2-typ_SF"/>
</dbReference>
<dbReference type="InterPro" id="IPR014721">
    <property type="entry name" value="Ribsml_uS5_D2-typ_fold_subgr"/>
</dbReference>
<dbReference type="InterPro" id="IPR005225">
    <property type="entry name" value="Small_GTP-bd"/>
</dbReference>
<dbReference type="InterPro" id="IPR000795">
    <property type="entry name" value="T_Tr_GTP-bd_dom"/>
</dbReference>
<dbReference type="InterPro" id="IPR009000">
    <property type="entry name" value="Transl_B-barrel_sf"/>
</dbReference>
<dbReference type="InterPro" id="IPR004540">
    <property type="entry name" value="Transl_elong_EFG/EF2"/>
</dbReference>
<dbReference type="InterPro" id="IPR005517">
    <property type="entry name" value="Transl_elong_EFG/EF2_IV"/>
</dbReference>
<dbReference type="NCBIfam" id="TIGR00484">
    <property type="entry name" value="EF-G"/>
    <property type="match status" value="1"/>
</dbReference>
<dbReference type="NCBIfam" id="NF009379">
    <property type="entry name" value="PRK12740.1-3"/>
    <property type="match status" value="1"/>
</dbReference>
<dbReference type="NCBIfam" id="NF009381">
    <property type="entry name" value="PRK12740.1-5"/>
    <property type="match status" value="1"/>
</dbReference>
<dbReference type="NCBIfam" id="TIGR00231">
    <property type="entry name" value="small_GTP"/>
    <property type="match status" value="1"/>
</dbReference>
<dbReference type="PANTHER" id="PTHR43261:SF1">
    <property type="entry name" value="RIBOSOME-RELEASING FACTOR 2, MITOCHONDRIAL"/>
    <property type="match status" value="1"/>
</dbReference>
<dbReference type="PANTHER" id="PTHR43261">
    <property type="entry name" value="TRANSLATION ELONGATION FACTOR G-RELATED"/>
    <property type="match status" value="1"/>
</dbReference>
<dbReference type="Pfam" id="PF00679">
    <property type="entry name" value="EFG_C"/>
    <property type="match status" value="1"/>
</dbReference>
<dbReference type="Pfam" id="PF14492">
    <property type="entry name" value="EFG_III"/>
    <property type="match status" value="1"/>
</dbReference>
<dbReference type="Pfam" id="PF03764">
    <property type="entry name" value="EFG_IV"/>
    <property type="match status" value="1"/>
</dbReference>
<dbReference type="Pfam" id="PF00009">
    <property type="entry name" value="GTP_EFTU"/>
    <property type="match status" value="1"/>
</dbReference>
<dbReference type="Pfam" id="PF03144">
    <property type="entry name" value="GTP_EFTU_D2"/>
    <property type="match status" value="1"/>
</dbReference>
<dbReference type="PRINTS" id="PR00315">
    <property type="entry name" value="ELONGATNFCT"/>
</dbReference>
<dbReference type="SMART" id="SM00838">
    <property type="entry name" value="EFG_C"/>
    <property type="match status" value="1"/>
</dbReference>
<dbReference type="SMART" id="SM00889">
    <property type="entry name" value="EFG_IV"/>
    <property type="match status" value="1"/>
</dbReference>
<dbReference type="SUPFAM" id="SSF54980">
    <property type="entry name" value="EF-G C-terminal domain-like"/>
    <property type="match status" value="2"/>
</dbReference>
<dbReference type="SUPFAM" id="SSF52540">
    <property type="entry name" value="P-loop containing nucleoside triphosphate hydrolases"/>
    <property type="match status" value="1"/>
</dbReference>
<dbReference type="SUPFAM" id="SSF54211">
    <property type="entry name" value="Ribosomal protein S5 domain 2-like"/>
    <property type="match status" value="1"/>
</dbReference>
<dbReference type="SUPFAM" id="SSF50447">
    <property type="entry name" value="Translation proteins"/>
    <property type="match status" value="1"/>
</dbReference>
<dbReference type="PROSITE" id="PS00301">
    <property type="entry name" value="G_TR_1"/>
    <property type="match status" value="1"/>
</dbReference>
<dbReference type="PROSITE" id="PS51722">
    <property type="entry name" value="G_TR_2"/>
    <property type="match status" value="1"/>
</dbReference>
<keyword id="KW-0963">Cytoplasm</keyword>
<keyword id="KW-0251">Elongation factor</keyword>
<keyword id="KW-0342">GTP-binding</keyword>
<keyword id="KW-0547">Nucleotide-binding</keyword>
<keyword id="KW-0648">Protein biosynthesis</keyword>
<comment type="function">
    <text evidence="1">Catalyzes the GTP-dependent ribosomal translocation step during translation elongation. During this step, the ribosome changes from the pre-translocational (PRE) to the post-translocational (POST) state as the newly formed A-site-bound peptidyl-tRNA and P-site-bound deacylated tRNA move to the P and E sites, respectively. Catalyzes the coordinated movement of the two tRNA molecules, the mRNA and conformational changes in the ribosome.</text>
</comment>
<comment type="subcellular location">
    <subcellularLocation>
        <location evidence="1">Cytoplasm</location>
    </subcellularLocation>
</comment>
<comment type="similarity">
    <text evidence="1">Belongs to the TRAFAC class translation factor GTPase superfamily. Classic translation factor GTPase family. EF-G/EF-2 subfamily.</text>
</comment>
<proteinExistence type="inferred from homology"/>
<protein>
    <recommendedName>
        <fullName evidence="1">Elongation factor G 1</fullName>
        <shortName evidence="1">EF-G 1</shortName>
    </recommendedName>
</protein>
<organism>
    <name type="scientific">Trichodesmium erythraeum (strain IMS101)</name>
    <dbReference type="NCBI Taxonomy" id="203124"/>
    <lineage>
        <taxon>Bacteria</taxon>
        <taxon>Bacillati</taxon>
        <taxon>Cyanobacteriota</taxon>
        <taxon>Cyanophyceae</taxon>
        <taxon>Oscillatoriophycideae</taxon>
        <taxon>Oscillatoriales</taxon>
        <taxon>Microcoleaceae</taxon>
        <taxon>Trichodesmium</taxon>
    </lineage>
</organism>
<name>EFG1_TRIEI</name>
<reference key="1">
    <citation type="journal article" date="2015" name="Proc. Natl. Acad. Sci. U.S.A.">
        <title>Trichodesmium genome maintains abundant, widespread noncoding DNA in situ, despite oligotrophic lifestyle.</title>
        <authorList>
            <person name="Walworth N."/>
            <person name="Pfreundt U."/>
            <person name="Nelson W.C."/>
            <person name="Mincer T."/>
            <person name="Heidelberg J.F."/>
            <person name="Fu F."/>
            <person name="Waterbury J.B."/>
            <person name="Glavina del Rio T."/>
            <person name="Goodwin L."/>
            <person name="Kyrpides N.C."/>
            <person name="Land M.L."/>
            <person name="Woyke T."/>
            <person name="Hutchins D.A."/>
            <person name="Hess W.R."/>
            <person name="Webb E.A."/>
        </authorList>
    </citation>
    <scope>NUCLEOTIDE SEQUENCE [LARGE SCALE GENOMIC DNA]</scope>
    <source>
        <strain>IMS101</strain>
    </source>
</reference>
<feature type="chain" id="PRO_0000263532" description="Elongation factor G 1">
    <location>
        <begin position="1"/>
        <end position="691"/>
    </location>
</feature>
<feature type="domain" description="tr-type G">
    <location>
        <begin position="8"/>
        <end position="282"/>
    </location>
</feature>
<feature type="binding site" evidence="1">
    <location>
        <begin position="17"/>
        <end position="24"/>
    </location>
    <ligand>
        <name>GTP</name>
        <dbReference type="ChEBI" id="CHEBI:37565"/>
    </ligand>
</feature>
<feature type="binding site" evidence="1">
    <location>
        <begin position="81"/>
        <end position="85"/>
    </location>
    <ligand>
        <name>GTP</name>
        <dbReference type="ChEBI" id="CHEBI:37565"/>
    </ligand>
</feature>
<feature type="binding site" evidence="1">
    <location>
        <begin position="135"/>
        <end position="138"/>
    </location>
    <ligand>
        <name>GTP</name>
        <dbReference type="ChEBI" id="CHEBI:37565"/>
    </ligand>
</feature>
<evidence type="ECO:0000255" key="1">
    <source>
        <dbReference type="HAMAP-Rule" id="MF_00054"/>
    </source>
</evidence>
<sequence length="691" mass="75989">MVRTMPIERVRNIGIAAHIDAGKTTTTERILFYSGIVHKMGEVHYGTAVTDWMAQERERGITITAAAISTKWLDHQINIIDTPGHVDFTIEVERSMRVLDGIIAVFCSVGGVQSQSETVWRQADRYQVPRMAFINKMDRTGANFFKVYEQIRDRLRANAVPIQIPIGSENEFTGIVDLVAMKALIYNDDQGTDIQETEIPADVEKLAQEYRLKLVESVAETDDALTEKYLEGEELTAEEIRKALRLATISGTVVPILCGSAFKNKGIQLLLNAVVDYLPAPQEVPAIQGTLPNGELDVRPADDEAPLASLAFKIMSDPYGRLTFLRVYSGVLAKGSYILNSTKDKKERISRLIVLKADDRIEVDELRAGDLGAVVGLKDTLTGDTICDKDNPIILESLYVPEPVISVAVEPKTKQDIDKLSQALQALSDEDPTFRVSVDPETNQTVIAGMGELHLEILVDRMLREYKVKANVGKPQVAYRETIRQQIQAEGKFIRQSGGKGQYGHVVIELEPGDPGSGFEFVSKIVGGTVPKEFISPAEQGMKEACEAGVLAGYPLIDVKATLVDGSYHDVDSSEMAFKIAGSMAIKEGVIKASPVLLEPMMKVEVEVPEDFIGNIIGDLNSRRGQIEGQGLETGMAKVMAKVPLAEMFGYATDMRSKTQGRGVFSMEFSNYEEVPHNVAETIISKSRGYV</sequence>